<name>RPOC_SHESR</name>
<organism>
    <name type="scientific">Shewanella sp. (strain MR-7)</name>
    <dbReference type="NCBI Taxonomy" id="60481"/>
    <lineage>
        <taxon>Bacteria</taxon>
        <taxon>Pseudomonadati</taxon>
        <taxon>Pseudomonadota</taxon>
        <taxon>Gammaproteobacteria</taxon>
        <taxon>Alteromonadales</taxon>
        <taxon>Shewanellaceae</taxon>
        <taxon>Shewanella</taxon>
    </lineage>
</organism>
<keyword id="KW-0240">DNA-directed RNA polymerase</keyword>
<keyword id="KW-0460">Magnesium</keyword>
<keyword id="KW-0479">Metal-binding</keyword>
<keyword id="KW-0548">Nucleotidyltransferase</keyword>
<keyword id="KW-0804">Transcription</keyword>
<keyword id="KW-0808">Transferase</keyword>
<keyword id="KW-0862">Zinc</keyword>
<comment type="function">
    <text evidence="1">DNA-dependent RNA polymerase catalyzes the transcription of DNA into RNA using the four ribonucleoside triphosphates as substrates.</text>
</comment>
<comment type="catalytic activity">
    <reaction evidence="1">
        <text>RNA(n) + a ribonucleoside 5'-triphosphate = RNA(n+1) + diphosphate</text>
        <dbReference type="Rhea" id="RHEA:21248"/>
        <dbReference type="Rhea" id="RHEA-COMP:14527"/>
        <dbReference type="Rhea" id="RHEA-COMP:17342"/>
        <dbReference type="ChEBI" id="CHEBI:33019"/>
        <dbReference type="ChEBI" id="CHEBI:61557"/>
        <dbReference type="ChEBI" id="CHEBI:140395"/>
        <dbReference type="EC" id="2.7.7.6"/>
    </reaction>
</comment>
<comment type="cofactor">
    <cofactor evidence="1">
        <name>Mg(2+)</name>
        <dbReference type="ChEBI" id="CHEBI:18420"/>
    </cofactor>
    <text evidence="1">Binds 1 Mg(2+) ion per subunit.</text>
</comment>
<comment type="cofactor">
    <cofactor evidence="1">
        <name>Zn(2+)</name>
        <dbReference type="ChEBI" id="CHEBI:29105"/>
    </cofactor>
    <text evidence="1">Binds 2 Zn(2+) ions per subunit.</text>
</comment>
<comment type="subunit">
    <text evidence="1">The RNAP catalytic core consists of 2 alpha, 1 beta, 1 beta' and 1 omega subunit. When a sigma factor is associated with the core the holoenzyme is formed, which can initiate transcription.</text>
</comment>
<comment type="similarity">
    <text evidence="1">Belongs to the RNA polymerase beta' chain family.</text>
</comment>
<accession>Q0I0B1</accession>
<protein>
    <recommendedName>
        <fullName evidence="1">DNA-directed RNA polymerase subunit beta'</fullName>
        <shortName evidence="1">RNAP subunit beta'</shortName>
        <ecNumber evidence="1">2.7.7.6</ecNumber>
    </recommendedName>
    <alternativeName>
        <fullName evidence="1">RNA polymerase subunit beta'</fullName>
    </alternativeName>
    <alternativeName>
        <fullName evidence="1">Transcriptase subunit beta'</fullName>
    </alternativeName>
</protein>
<evidence type="ECO:0000255" key="1">
    <source>
        <dbReference type="HAMAP-Rule" id="MF_01322"/>
    </source>
</evidence>
<gene>
    <name evidence="1" type="primary">rpoC</name>
    <name type="ordered locus">Shewmr7_0188</name>
</gene>
<sequence>MKDLLKFLKQQSKTEEFNGIKIGLASPDLIRSWSFGEVKKPETINYRTFKPEREGLFCARIFGPVKDYECLCGKYKRLKHRGVICEKCGVEVTQTKVRRERMGHIELASPVAHIWFLKSLPSRIGLMLDMTLRDIERVLYFESFVVIEPGMTSLERGQMLTEENYLDALEEYGDEFEAKMGAEAVLELLRAIDLEKEIEQMREELPSINSETRRKKVTKRLKLMEAFHTSGNKPEWMILKVLPVLPPDLRPLVPLDGGRFATSDLNDLYRRVINRNNRLKRLLDLAAPDIIVRNEKRMLQESVDALLDNGRRGRAITGSNKRPLKSLADMIKGKQGRFRQNLLGKRVDYSGRSVITVGPTLRLHQCGLPKKMALELFKPFIYGKLEGRGLATTIKAAKKMVEREVAEVWDVLDEVIREHPVMLNRAPTLHRLGIQAFEPVLIEGKAIQLHPLVCAAYNADFDGDQMAVHVPLTLEAQLEARALMMSTNNILSPANGEPVITPSQDVVLGLYYTSRERINGRGEGMYFMSVAEVEKAYATGAAELHARVKVRITETVIGDNGERTEQRRIVDTTVGRALLSQILPAGLSFDLVNQNMGKKQISKLLNTCYRQLGLKDTVIFADQLMYTGFRYATISGASVGIDDMVIPAEKYTLVADAEAEVLEIQEQFQSGLVTAGERYNKVIDIWASANEKVSKAMMENLSTETVINRDGVEEKQASFNSIYMMADSGARGSAAQIRQLAGMRGLMAKPDGSIIETPIVANFREGLNVLQYFISTHGARKGLADTALKTANSGYLTRRLVDVAQDLVVIEDDCGTHEGLTMKPLIEGGDVVEPLRERVLGRVVAVDVMYPGTEDVLAPRNTLLDEAWCDKLEEHSIDEVIVRSVITCDTDFGVCAACYGRDLARGHLINHGEAIGVVAAQSIGEPGTQLTMRTFHIGGAASRASAENNVQVKNSGSLKLHNAKYVTNTDGKLVIVSRSSELAIIDELGREKERYKVPYGTVLEKLEEASVEAGDIIANWDPHTHPIITEVAGSIKFVDMIDGVTMTRQTDELTGLSSIVILDVGQRGSAGKEMRPMIRLVGADGSDLMIPGTEVPAQYFLPGSAIVNLDDNAQIAVGDALARIPQESSKTRDITGGLPRVADLFEARKPKEPAILAEISGTISFGKETKGKRRLVITPADGGEQYEEMIPKWRNLNVFEGEKVERGEVIADGPEAAHDILRLRGIHNVANYIVNEVQDVYRLQGVKINDKHIEVIIRQMLRKCVITSAGDSEFLEGEQVEVSRVKIANRELVEQGKVPATFERELLGITKASLATESFISAASFQETTRVLTEAAVGGKSDNLRGLKENVIVGRLIPAGTGYAYHKTRNDARAKKDEPVVVNKITASEAEQNLADLLNLAGSQD</sequence>
<reference key="1">
    <citation type="submission" date="2006-08" db="EMBL/GenBank/DDBJ databases">
        <title>Complete sequence of chromosome 1 of Shewanella sp. MR-7.</title>
        <authorList>
            <person name="Copeland A."/>
            <person name="Lucas S."/>
            <person name="Lapidus A."/>
            <person name="Barry K."/>
            <person name="Detter J.C."/>
            <person name="Glavina del Rio T."/>
            <person name="Hammon N."/>
            <person name="Israni S."/>
            <person name="Dalin E."/>
            <person name="Tice H."/>
            <person name="Pitluck S."/>
            <person name="Kiss H."/>
            <person name="Brettin T."/>
            <person name="Bruce D."/>
            <person name="Han C."/>
            <person name="Tapia R."/>
            <person name="Gilna P."/>
            <person name="Schmutz J."/>
            <person name="Larimer F."/>
            <person name="Land M."/>
            <person name="Hauser L."/>
            <person name="Kyrpides N."/>
            <person name="Mikhailova N."/>
            <person name="Nealson K."/>
            <person name="Konstantinidis K."/>
            <person name="Klappenbach J."/>
            <person name="Tiedje J."/>
            <person name="Richardson P."/>
        </authorList>
    </citation>
    <scope>NUCLEOTIDE SEQUENCE [LARGE SCALE GENOMIC DNA]</scope>
    <source>
        <strain>MR-7</strain>
    </source>
</reference>
<feature type="chain" id="PRO_0000308881" description="DNA-directed RNA polymerase subunit beta'">
    <location>
        <begin position="1"/>
        <end position="1405"/>
    </location>
</feature>
<feature type="binding site" evidence="1">
    <location>
        <position position="70"/>
    </location>
    <ligand>
        <name>Zn(2+)</name>
        <dbReference type="ChEBI" id="CHEBI:29105"/>
        <label>1</label>
    </ligand>
</feature>
<feature type="binding site" evidence="1">
    <location>
        <position position="72"/>
    </location>
    <ligand>
        <name>Zn(2+)</name>
        <dbReference type="ChEBI" id="CHEBI:29105"/>
        <label>1</label>
    </ligand>
</feature>
<feature type="binding site" evidence="1">
    <location>
        <position position="85"/>
    </location>
    <ligand>
        <name>Zn(2+)</name>
        <dbReference type="ChEBI" id="CHEBI:29105"/>
        <label>1</label>
    </ligand>
</feature>
<feature type="binding site" evidence="1">
    <location>
        <position position="88"/>
    </location>
    <ligand>
        <name>Zn(2+)</name>
        <dbReference type="ChEBI" id="CHEBI:29105"/>
        <label>1</label>
    </ligand>
</feature>
<feature type="binding site" evidence="1">
    <location>
        <position position="460"/>
    </location>
    <ligand>
        <name>Mg(2+)</name>
        <dbReference type="ChEBI" id="CHEBI:18420"/>
    </ligand>
</feature>
<feature type="binding site" evidence="1">
    <location>
        <position position="462"/>
    </location>
    <ligand>
        <name>Mg(2+)</name>
        <dbReference type="ChEBI" id="CHEBI:18420"/>
    </ligand>
</feature>
<feature type="binding site" evidence="1">
    <location>
        <position position="464"/>
    </location>
    <ligand>
        <name>Mg(2+)</name>
        <dbReference type="ChEBI" id="CHEBI:18420"/>
    </ligand>
</feature>
<feature type="binding site" evidence="1">
    <location>
        <position position="814"/>
    </location>
    <ligand>
        <name>Zn(2+)</name>
        <dbReference type="ChEBI" id="CHEBI:29105"/>
        <label>2</label>
    </ligand>
</feature>
<feature type="binding site" evidence="1">
    <location>
        <position position="888"/>
    </location>
    <ligand>
        <name>Zn(2+)</name>
        <dbReference type="ChEBI" id="CHEBI:29105"/>
        <label>2</label>
    </ligand>
</feature>
<feature type="binding site" evidence="1">
    <location>
        <position position="895"/>
    </location>
    <ligand>
        <name>Zn(2+)</name>
        <dbReference type="ChEBI" id="CHEBI:29105"/>
        <label>2</label>
    </ligand>
</feature>
<feature type="binding site" evidence="1">
    <location>
        <position position="898"/>
    </location>
    <ligand>
        <name>Zn(2+)</name>
        <dbReference type="ChEBI" id="CHEBI:29105"/>
        <label>2</label>
    </ligand>
</feature>
<proteinExistence type="inferred from homology"/>
<dbReference type="EC" id="2.7.7.6" evidence="1"/>
<dbReference type="EMBL" id="CP000444">
    <property type="protein sequence ID" value="ABI41194.1"/>
    <property type="molecule type" value="Genomic_DNA"/>
</dbReference>
<dbReference type="SMR" id="Q0I0B1"/>
<dbReference type="KEGG" id="shm:Shewmr7_0188"/>
<dbReference type="HOGENOM" id="CLU_000524_3_1_6"/>
<dbReference type="GO" id="GO:0000428">
    <property type="term" value="C:DNA-directed RNA polymerase complex"/>
    <property type="evidence" value="ECO:0007669"/>
    <property type="project" value="UniProtKB-KW"/>
</dbReference>
<dbReference type="GO" id="GO:0003677">
    <property type="term" value="F:DNA binding"/>
    <property type="evidence" value="ECO:0007669"/>
    <property type="project" value="UniProtKB-UniRule"/>
</dbReference>
<dbReference type="GO" id="GO:0003899">
    <property type="term" value="F:DNA-directed RNA polymerase activity"/>
    <property type="evidence" value="ECO:0007669"/>
    <property type="project" value="UniProtKB-UniRule"/>
</dbReference>
<dbReference type="GO" id="GO:0000287">
    <property type="term" value="F:magnesium ion binding"/>
    <property type="evidence" value="ECO:0007669"/>
    <property type="project" value="UniProtKB-UniRule"/>
</dbReference>
<dbReference type="GO" id="GO:0008270">
    <property type="term" value="F:zinc ion binding"/>
    <property type="evidence" value="ECO:0007669"/>
    <property type="project" value="UniProtKB-UniRule"/>
</dbReference>
<dbReference type="GO" id="GO:0006351">
    <property type="term" value="P:DNA-templated transcription"/>
    <property type="evidence" value="ECO:0007669"/>
    <property type="project" value="UniProtKB-UniRule"/>
</dbReference>
<dbReference type="CDD" id="cd02655">
    <property type="entry name" value="RNAP_beta'_C"/>
    <property type="match status" value="1"/>
</dbReference>
<dbReference type="CDD" id="cd01609">
    <property type="entry name" value="RNAP_beta'_N"/>
    <property type="match status" value="1"/>
</dbReference>
<dbReference type="FunFam" id="1.10.132.30:FF:000003">
    <property type="entry name" value="DNA-directed RNA polymerase subunit beta"/>
    <property type="match status" value="1"/>
</dbReference>
<dbReference type="FunFam" id="1.10.150.390:FF:000002">
    <property type="entry name" value="DNA-directed RNA polymerase subunit beta"/>
    <property type="match status" value="1"/>
</dbReference>
<dbReference type="FunFam" id="1.10.40.90:FF:000001">
    <property type="entry name" value="DNA-directed RNA polymerase subunit beta"/>
    <property type="match status" value="1"/>
</dbReference>
<dbReference type="FunFam" id="4.10.860.120:FF:000001">
    <property type="entry name" value="DNA-directed RNA polymerase subunit beta"/>
    <property type="match status" value="1"/>
</dbReference>
<dbReference type="Gene3D" id="1.10.132.30">
    <property type="match status" value="1"/>
</dbReference>
<dbReference type="Gene3D" id="1.10.150.390">
    <property type="match status" value="1"/>
</dbReference>
<dbReference type="Gene3D" id="1.10.1790.20">
    <property type="match status" value="1"/>
</dbReference>
<dbReference type="Gene3D" id="1.10.40.90">
    <property type="match status" value="1"/>
</dbReference>
<dbReference type="Gene3D" id="2.40.40.20">
    <property type="match status" value="1"/>
</dbReference>
<dbReference type="Gene3D" id="2.40.50.100">
    <property type="match status" value="3"/>
</dbReference>
<dbReference type="Gene3D" id="4.10.860.120">
    <property type="entry name" value="RNA polymerase II, clamp domain"/>
    <property type="match status" value="1"/>
</dbReference>
<dbReference type="Gene3D" id="1.10.274.100">
    <property type="entry name" value="RNA polymerase Rpb1, domain 3"/>
    <property type="match status" value="1"/>
</dbReference>
<dbReference type="HAMAP" id="MF_01322">
    <property type="entry name" value="RNApol_bact_RpoC"/>
    <property type="match status" value="1"/>
</dbReference>
<dbReference type="InterPro" id="IPR045867">
    <property type="entry name" value="DNA-dir_RpoC_beta_prime"/>
</dbReference>
<dbReference type="InterPro" id="IPR012754">
    <property type="entry name" value="DNA-dir_RpoC_beta_prime_bact"/>
</dbReference>
<dbReference type="InterPro" id="IPR000722">
    <property type="entry name" value="RNA_pol_asu"/>
</dbReference>
<dbReference type="InterPro" id="IPR006592">
    <property type="entry name" value="RNA_pol_N"/>
</dbReference>
<dbReference type="InterPro" id="IPR007080">
    <property type="entry name" value="RNA_pol_Rpb1_1"/>
</dbReference>
<dbReference type="InterPro" id="IPR007066">
    <property type="entry name" value="RNA_pol_Rpb1_3"/>
</dbReference>
<dbReference type="InterPro" id="IPR042102">
    <property type="entry name" value="RNA_pol_Rpb1_3_sf"/>
</dbReference>
<dbReference type="InterPro" id="IPR007083">
    <property type="entry name" value="RNA_pol_Rpb1_4"/>
</dbReference>
<dbReference type="InterPro" id="IPR007081">
    <property type="entry name" value="RNA_pol_Rpb1_5"/>
</dbReference>
<dbReference type="InterPro" id="IPR044893">
    <property type="entry name" value="RNA_pol_Rpb1_clamp_domain"/>
</dbReference>
<dbReference type="InterPro" id="IPR038120">
    <property type="entry name" value="Rpb1_funnel_sf"/>
</dbReference>
<dbReference type="NCBIfam" id="TIGR02386">
    <property type="entry name" value="rpoC_TIGR"/>
    <property type="match status" value="1"/>
</dbReference>
<dbReference type="PANTHER" id="PTHR19376">
    <property type="entry name" value="DNA-DIRECTED RNA POLYMERASE"/>
    <property type="match status" value="1"/>
</dbReference>
<dbReference type="PANTHER" id="PTHR19376:SF54">
    <property type="entry name" value="DNA-DIRECTED RNA POLYMERASE SUBUNIT BETA"/>
    <property type="match status" value="1"/>
</dbReference>
<dbReference type="Pfam" id="PF04997">
    <property type="entry name" value="RNA_pol_Rpb1_1"/>
    <property type="match status" value="1"/>
</dbReference>
<dbReference type="Pfam" id="PF00623">
    <property type="entry name" value="RNA_pol_Rpb1_2"/>
    <property type="match status" value="2"/>
</dbReference>
<dbReference type="Pfam" id="PF04983">
    <property type="entry name" value="RNA_pol_Rpb1_3"/>
    <property type="match status" value="1"/>
</dbReference>
<dbReference type="Pfam" id="PF05000">
    <property type="entry name" value="RNA_pol_Rpb1_4"/>
    <property type="match status" value="1"/>
</dbReference>
<dbReference type="Pfam" id="PF04998">
    <property type="entry name" value="RNA_pol_Rpb1_5"/>
    <property type="match status" value="1"/>
</dbReference>
<dbReference type="SMART" id="SM00663">
    <property type="entry name" value="RPOLA_N"/>
    <property type="match status" value="1"/>
</dbReference>
<dbReference type="SUPFAM" id="SSF64484">
    <property type="entry name" value="beta and beta-prime subunits of DNA dependent RNA-polymerase"/>
    <property type="match status" value="1"/>
</dbReference>